<comment type="function">
    <text>Apoprotein for the two 4Fe-4S centers FA and FB of photosystem I (PSI); essential for photochemical activity. FB is the terminal electron acceptor of PSI, donating electrons to ferredoxin. The C-terminus interacts with PsaA/B/D and helps assemble the protein into the PSI complex. Required for binding of PsaD and PsaE to PSI. PSI is a plastocyanin/cytochrome c6-ferredoxin oxidoreductase, converting photonic excitation into a charge separation, which transfers an electron from the donor P700 chlorophyll pair to the spectroscopically characterized acceptors A0, A1, FX, FA and FB in turn.</text>
</comment>
<comment type="catalytic activity">
    <reaction evidence="2">
        <text>reduced [plastocyanin] + hnu + oxidized [2Fe-2S]-[ferredoxin] = oxidized [plastocyanin] + reduced [2Fe-2S]-[ferredoxin]</text>
        <dbReference type="Rhea" id="RHEA:30407"/>
        <dbReference type="Rhea" id="RHEA-COMP:10000"/>
        <dbReference type="Rhea" id="RHEA-COMP:10001"/>
        <dbReference type="Rhea" id="RHEA-COMP:10039"/>
        <dbReference type="Rhea" id="RHEA-COMP:10040"/>
        <dbReference type="ChEBI" id="CHEBI:29036"/>
        <dbReference type="ChEBI" id="CHEBI:30212"/>
        <dbReference type="ChEBI" id="CHEBI:33737"/>
        <dbReference type="ChEBI" id="CHEBI:33738"/>
        <dbReference type="ChEBI" id="CHEBI:49552"/>
        <dbReference type="EC" id="1.97.1.12"/>
    </reaction>
</comment>
<comment type="cofactor">
    <cofactor evidence="2">
        <name>[4Fe-4S] cluster</name>
        <dbReference type="ChEBI" id="CHEBI:49883"/>
    </cofactor>
    <text evidence="2">Binds 2 [4Fe-4S] clusters. Cluster 2 is most probably the spectroscopically characterized electron acceptor FA and cluster 1 is most probably FB.</text>
</comment>
<comment type="subunit">
    <text evidence="2">The eukaryotic PSI reaction center is composed of at least 11 subunits.</text>
</comment>
<comment type="subcellular location">
    <subcellularLocation>
        <location evidence="2">Plastid</location>
        <location evidence="2">Chloroplast thylakoid membrane</location>
        <topology evidence="2">Peripheral membrane protein</topology>
        <orientation evidence="2">Stromal side</orientation>
    </subcellularLocation>
</comment>
<accession>Q1XDB3</accession>
<gene>
    <name evidence="2" type="primary">psaC</name>
</gene>
<name>PSAC_PYRYE</name>
<geneLocation type="chloroplast"/>
<organism>
    <name type="scientific">Pyropia yezoensis</name>
    <name type="common">Susabi-nori</name>
    <name type="synonym">Porphyra yezoensis</name>
    <dbReference type="NCBI Taxonomy" id="2788"/>
    <lineage>
        <taxon>Eukaryota</taxon>
        <taxon>Rhodophyta</taxon>
        <taxon>Bangiophyceae</taxon>
        <taxon>Bangiales</taxon>
        <taxon>Bangiaceae</taxon>
        <taxon>Pyropia</taxon>
    </lineage>
</organism>
<keyword id="KW-0004">4Fe-4S</keyword>
<keyword id="KW-0150">Chloroplast</keyword>
<keyword id="KW-0249">Electron transport</keyword>
<keyword id="KW-0408">Iron</keyword>
<keyword id="KW-0411">Iron-sulfur</keyword>
<keyword id="KW-0472">Membrane</keyword>
<keyword id="KW-0479">Metal-binding</keyword>
<keyword id="KW-0560">Oxidoreductase</keyword>
<keyword id="KW-0602">Photosynthesis</keyword>
<keyword id="KW-0603">Photosystem I</keyword>
<keyword id="KW-0934">Plastid</keyword>
<keyword id="KW-0677">Repeat</keyword>
<keyword id="KW-0793">Thylakoid</keyword>
<keyword id="KW-0813">Transport</keyword>
<sequence>MAHSVKVYDTCIGCTQCVRACPCDVLEMVPWDGCKAKQIASAPRTEDCIGCKRCETACPTDFLSVRVYLGAETTRSMGLAY</sequence>
<dbReference type="EC" id="1.97.1.12" evidence="2"/>
<dbReference type="EMBL" id="AP006715">
    <property type="protein sequence ID" value="BAE92498.1"/>
    <property type="molecule type" value="Genomic_DNA"/>
</dbReference>
<dbReference type="RefSeq" id="YP_537055.1">
    <property type="nucleotide sequence ID" value="NC_007932.1"/>
</dbReference>
<dbReference type="SMR" id="Q1XDB3"/>
<dbReference type="GeneID" id="3978948"/>
<dbReference type="GO" id="GO:0009535">
    <property type="term" value="C:chloroplast thylakoid membrane"/>
    <property type="evidence" value="ECO:0007669"/>
    <property type="project" value="UniProtKB-SubCell"/>
</dbReference>
<dbReference type="GO" id="GO:0009522">
    <property type="term" value="C:photosystem I"/>
    <property type="evidence" value="ECO:0007669"/>
    <property type="project" value="UniProtKB-KW"/>
</dbReference>
<dbReference type="GO" id="GO:0051539">
    <property type="term" value="F:4 iron, 4 sulfur cluster binding"/>
    <property type="evidence" value="ECO:0007669"/>
    <property type="project" value="UniProtKB-KW"/>
</dbReference>
<dbReference type="GO" id="GO:0009055">
    <property type="term" value="F:electron transfer activity"/>
    <property type="evidence" value="ECO:0007669"/>
    <property type="project" value="UniProtKB-UniRule"/>
</dbReference>
<dbReference type="GO" id="GO:0046872">
    <property type="term" value="F:metal ion binding"/>
    <property type="evidence" value="ECO:0007669"/>
    <property type="project" value="UniProtKB-KW"/>
</dbReference>
<dbReference type="GO" id="GO:0016491">
    <property type="term" value="F:oxidoreductase activity"/>
    <property type="evidence" value="ECO:0007669"/>
    <property type="project" value="UniProtKB-KW"/>
</dbReference>
<dbReference type="GO" id="GO:0009773">
    <property type="term" value="P:photosynthetic electron transport in photosystem I"/>
    <property type="evidence" value="ECO:0007669"/>
    <property type="project" value="InterPro"/>
</dbReference>
<dbReference type="FunFam" id="3.30.70.20:FF:000001">
    <property type="entry name" value="Photosystem I iron-sulfur center"/>
    <property type="match status" value="1"/>
</dbReference>
<dbReference type="Gene3D" id="3.30.70.20">
    <property type="match status" value="1"/>
</dbReference>
<dbReference type="HAMAP" id="MF_01303">
    <property type="entry name" value="PSI_PsaC"/>
    <property type="match status" value="1"/>
</dbReference>
<dbReference type="InterPro" id="IPR017896">
    <property type="entry name" value="4Fe4S_Fe-S-bd"/>
</dbReference>
<dbReference type="InterPro" id="IPR017900">
    <property type="entry name" value="4Fe4S_Fe_S_CS"/>
</dbReference>
<dbReference type="InterPro" id="IPR050157">
    <property type="entry name" value="PSI_iron-sulfur_center"/>
</dbReference>
<dbReference type="InterPro" id="IPR017491">
    <property type="entry name" value="PSI_PsaC"/>
</dbReference>
<dbReference type="NCBIfam" id="TIGR03048">
    <property type="entry name" value="PS_I_psaC"/>
    <property type="match status" value="1"/>
</dbReference>
<dbReference type="PANTHER" id="PTHR24960:SF79">
    <property type="entry name" value="PHOTOSYSTEM I IRON-SULFUR CENTER"/>
    <property type="match status" value="1"/>
</dbReference>
<dbReference type="PANTHER" id="PTHR24960">
    <property type="entry name" value="PHOTOSYSTEM I IRON-SULFUR CENTER-RELATED"/>
    <property type="match status" value="1"/>
</dbReference>
<dbReference type="Pfam" id="PF12838">
    <property type="entry name" value="Fer4_7"/>
    <property type="match status" value="1"/>
</dbReference>
<dbReference type="SUPFAM" id="SSF54862">
    <property type="entry name" value="4Fe-4S ferredoxins"/>
    <property type="match status" value="1"/>
</dbReference>
<dbReference type="PROSITE" id="PS00198">
    <property type="entry name" value="4FE4S_FER_1"/>
    <property type="match status" value="2"/>
</dbReference>
<dbReference type="PROSITE" id="PS51379">
    <property type="entry name" value="4FE4S_FER_2"/>
    <property type="match status" value="2"/>
</dbReference>
<reference key="1">
    <citation type="submission" date="2003-11" db="EMBL/GenBank/DDBJ databases">
        <title>Whole genome sequence of Porphyra yezoensis chloroplast.</title>
        <authorList>
            <person name="Kunimoto M."/>
            <person name="Morishima K."/>
            <person name="Yoshikawa M."/>
            <person name="Fukuda S."/>
            <person name="Kobayashi T."/>
            <person name="Kobayashi M."/>
            <person name="Okazaki T."/>
            <person name="Ohara I."/>
            <person name="Nakayama I."/>
        </authorList>
    </citation>
    <scope>NUCLEOTIDE SEQUENCE [LARGE SCALE GENOMIC DNA]</scope>
    <source>
        <strain>U-51</strain>
    </source>
</reference>
<feature type="initiator methionine" description="Removed" evidence="1">
    <location>
        <position position="1"/>
    </location>
</feature>
<feature type="chain" id="PRO_0000276008" description="Photosystem I iron-sulfur center">
    <location>
        <begin position="2"/>
        <end position="81"/>
    </location>
</feature>
<feature type="domain" description="4Fe-4S ferredoxin-type 1" evidence="2">
    <location>
        <begin position="2"/>
        <end position="31"/>
    </location>
</feature>
<feature type="domain" description="4Fe-4S ferredoxin-type 2" evidence="2">
    <location>
        <begin position="39"/>
        <end position="68"/>
    </location>
</feature>
<feature type="binding site" evidence="2">
    <location>
        <position position="11"/>
    </location>
    <ligand>
        <name>[4Fe-4S] cluster</name>
        <dbReference type="ChEBI" id="CHEBI:49883"/>
        <label>1</label>
    </ligand>
</feature>
<feature type="binding site" evidence="2">
    <location>
        <position position="14"/>
    </location>
    <ligand>
        <name>[4Fe-4S] cluster</name>
        <dbReference type="ChEBI" id="CHEBI:49883"/>
        <label>1</label>
    </ligand>
</feature>
<feature type="binding site" evidence="2">
    <location>
        <position position="17"/>
    </location>
    <ligand>
        <name>[4Fe-4S] cluster</name>
        <dbReference type="ChEBI" id="CHEBI:49883"/>
        <label>1</label>
    </ligand>
</feature>
<feature type="binding site" evidence="2">
    <location>
        <position position="21"/>
    </location>
    <ligand>
        <name>[4Fe-4S] cluster</name>
        <dbReference type="ChEBI" id="CHEBI:49883"/>
        <label>2</label>
    </ligand>
</feature>
<feature type="binding site" evidence="2">
    <location>
        <position position="48"/>
    </location>
    <ligand>
        <name>[4Fe-4S] cluster</name>
        <dbReference type="ChEBI" id="CHEBI:49883"/>
        <label>2</label>
    </ligand>
</feature>
<feature type="binding site" evidence="2">
    <location>
        <position position="51"/>
    </location>
    <ligand>
        <name>[4Fe-4S] cluster</name>
        <dbReference type="ChEBI" id="CHEBI:49883"/>
        <label>2</label>
    </ligand>
</feature>
<feature type="binding site" evidence="2">
    <location>
        <position position="54"/>
    </location>
    <ligand>
        <name>[4Fe-4S] cluster</name>
        <dbReference type="ChEBI" id="CHEBI:49883"/>
        <label>2</label>
    </ligand>
</feature>
<feature type="binding site" evidence="2">
    <location>
        <position position="58"/>
    </location>
    <ligand>
        <name>[4Fe-4S] cluster</name>
        <dbReference type="ChEBI" id="CHEBI:49883"/>
        <label>1</label>
    </ligand>
</feature>
<proteinExistence type="inferred from homology"/>
<protein>
    <recommendedName>
        <fullName evidence="2">Photosystem I iron-sulfur center</fullName>
        <ecNumber evidence="2">1.97.1.12</ecNumber>
    </recommendedName>
    <alternativeName>
        <fullName evidence="2">9 kDa polypeptide</fullName>
    </alternativeName>
    <alternativeName>
        <fullName evidence="2">PSI-C</fullName>
    </alternativeName>
    <alternativeName>
        <fullName evidence="2">Photosystem I subunit VII</fullName>
    </alternativeName>
    <alternativeName>
        <fullName evidence="2">PsaC</fullName>
    </alternativeName>
</protein>
<evidence type="ECO:0000250" key="1"/>
<evidence type="ECO:0000255" key="2">
    <source>
        <dbReference type="HAMAP-Rule" id="MF_01303"/>
    </source>
</evidence>